<evidence type="ECO:0000255" key="1">
    <source>
        <dbReference type="HAMAP-Rule" id="MF_00048"/>
    </source>
</evidence>
<organism>
    <name type="scientific">Campylobacter jejuni subsp. jejuni serotype O:6 (strain 81116 / NCTC 11828)</name>
    <dbReference type="NCBI Taxonomy" id="407148"/>
    <lineage>
        <taxon>Bacteria</taxon>
        <taxon>Pseudomonadati</taxon>
        <taxon>Campylobacterota</taxon>
        <taxon>Epsilonproteobacteria</taxon>
        <taxon>Campylobacterales</taxon>
        <taxon>Campylobacteraceae</taxon>
        <taxon>Campylobacter</taxon>
    </lineage>
</organism>
<sequence length="112" mass="13179">MGVKAYLDGILGEDKACKFLKKQGFEILKRNFHSKFGEIDIIAKKDEILHFIEVKFTQNDYEVSERLDRKKLEKILKTIEFYHLKNGISSDFQIDLICIKNDVIQFCENISF</sequence>
<protein>
    <recommendedName>
        <fullName evidence="1">UPF0102 protein C8J_0145</fullName>
    </recommendedName>
</protein>
<comment type="similarity">
    <text evidence="1">Belongs to the UPF0102 family.</text>
</comment>
<reference key="1">
    <citation type="journal article" date="2007" name="J. Bacteriol.">
        <title>The complete genome sequence of Campylobacter jejuni strain 81116 (NCTC11828).</title>
        <authorList>
            <person name="Pearson B.M."/>
            <person name="Gaskin D.J.H."/>
            <person name="Segers R.P.A.M."/>
            <person name="Wells J.M."/>
            <person name="Nuijten P.J.M."/>
            <person name="van Vliet A.H.M."/>
        </authorList>
    </citation>
    <scope>NUCLEOTIDE SEQUENCE [LARGE SCALE GENOMIC DNA]</scope>
    <source>
        <strain>81116 / NCTC 11828</strain>
    </source>
</reference>
<accession>A8FJV7</accession>
<feature type="chain" id="PRO_1000071104" description="UPF0102 protein C8J_0145">
    <location>
        <begin position="1"/>
        <end position="112"/>
    </location>
</feature>
<proteinExistence type="inferred from homology"/>
<gene>
    <name type="ordered locus">C8J_0145</name>
</gene>
<dbReference type="EMBL" id="CP000814">
    <property type="protein sequence ID" value="ABV51744.1"/>
    <property type="molecule type" value="Genomic_DNA"/>
</dbReference>
<dbReference type="RefSeq" id="WP_002851874.1">
    <property type="nucleotide sequence ID" value="NC_009839.1"/>
</dbReference>
<dbReference type="SMR" id="A8FJV7"/>
<dbReference type="KEGG" id="cju:C8J_0145"/>
<dbReference type="HOGENOM" id="CLU_115353_3_2_7"/>
<dbReference type="GO" id="GO:0003676">
    <property type="term" value="F:nucleic acid binding"/>
    <property type="evidence" value="ECO:0007669"/>
    <property type="project" value="InterPro"/>
</dbReference>
<dbReference type="Gene3D" id="3.40.1350.10">
    <property type="match status" value="1"/>
</dbReference>
<dbReference type="HAMAP" id="MF_00048">
    <property type="entry name" value="UPF0102"/>
    <property type="match status" value="1"/>
</dbReference>
<dbReference type="InterPro" id="IPR011335">
    <property type="entry name" value="Restrct_endonuc-II-like"/>
</dbReference>
<dbReference type="InterPro" id="IPR011856">
    <property type="entry name" value="tRNA_endonuc-like_dom_sf"/>
</dbReference>
<dbReference type="InterPro" id="IPR003509">
    <property type="entry name" value="UPF0102_YraN-like"/>
</dbReference>
<dbReference type="NCBIfam" id="NF009152">
    <property type="entry name" value="PRK12497.2-4"/>
    <property type="match status" value="1"/>
</dbReference>
<dbReference type="PANTHER" id="PTHR34039">
    <property type="entry name" value="UPF0102 PROTEIN YRAN"/>
    <property type="match status" value="1"/>
</dbReference>
<dbReference type="PANTHER" id="PTHR34039:SF1">
    <property type="entry name" value="UPF0102 PROTEIN YRAN"/>
    <property type="match status" value="1"/>
</dbReference>
<dbReference type="Pfam" id="PF02021">
    <property type="entry name" value="UPF0102"/>
    <property type="match status" value="1"/>
</dbReference>
<dbReference type="SUPFAM" id="SSF52980">
    <property type="entry name" value="Restriction endonuclease-like"/>
    <property type="match status" value="1"/>
</dbReference>
<name>Y145_CAMJ8</name>